<feature type="chain" id="PRO_1000073077" description="tRNA(Ile)-lysidine synthase">
    <location>
        <begin position="1"/>
        <end position="448"/>
    </location>
</feature>
<feature type="binding site" evidence="1">
    <location>
        <begin position="27"/>
        <end position="32"/>
    </location>
    <ligand>
        <name>ATP</name>
        <dbReference type="ChEBI" id="CHEBI:30616"/>
    </ligand>
</feature>
<comment type="function">
    <text evidence="1">Ligates lysine onto the cytidine present at position 34 of the AUA codon-specific tRNA(Ile) that contains the anticodon CAU, in an ATP-dependent manner. Cytidine is converted to lysidine, thus changing the amino acid specificity of the tRNA from methionine to isoleucine.</text>
</comment>
<comment type="catalytic activity">
    <reaction evidence="1">
        <text>cytidine(34) in tRNA(Ile2) + L-lysine + ATP = lysidine(34) in tRNA(Ile2) + AMP + diphosphate + H(+)</text>
        <dbReference type="Rhea" id="RHEA:43744"/>
        <dbReference type="Rhea" id="RHEA-COMP:10625"/>
        <dbReference type="Rhea" id="RHEA-COMP:10670"/>
        <dbReference type="ChEBI" id="CHEBI:15378"/>
        <dbReference type="ChEBI" id="CHEBI:30616"/>
        <dbReference type="ChEBI" id="CHEBI:32551"/>
        <dbReference type="ChEBI" id="CHEBI:33019"/>
        <dbReference type="ChEBI" id="CHEBI:82748"/>
        <dbReference type="ChEBI" id="CHEBI:83665"/>
        <dbReference type="ChEBI" id="CHEBI:456215"/>
        <dbReference type="EC" id="6.3.4.19"/>
    </reaction>
</comment>
<comment type="subcellular location">
    <subcellularLocation>
        <location evidence="1">Cytoplasm</location>
    </subcellularLocation>
</comment>
<comment type="domain">
    <text>The N-terminal region contains the highly conserved SGGXDS motif, predicted to be a P-loop motif involved in ATP binding.</text>
</comment>
<comment type="similarity">
    <text evidence="1">Belongs to the tRNA(Ile)-lysidine synthase family.</text>
</comment>
<keyword id="KW-0067">ATP-binding</keyword>
<keyword id="KW-0963">Cytoplasm</keyword>
<keyword id="KW-0436">Ligase</keyword>
<keyword id="KW-0547">Nucleotide-binding</keyword>
<keyword id="KW-0819">tRNA processing</keyword>
<protein>
    <recommendedName>
        <fullName evidence="1">tRNA(Ile)-lysidine synthase</fullName>
        <ecNumber evidence="1">6.3.4.19</ecNumber>
    </recommendedName>
    <alternativeName>
        <fullName evidence="1">tRNA(Ile)-2-lysyl-cytidine synthase</fullName>
    </alternativeName>
    <alternativeName>
        <fullName evidence="1">tRNA(Ile)-lysidine synthetase</fullName>
    </alternativeName>
</protein>
<evidence type="ECO:0000255" key="1">
    <source>
        <dbReference type="HAMAP-Rule" id="MF_01161"/>
    </source>
</evidence>
<sequence length="448" mass="50662">MESLYSQFAQVLERYYQSGTKIVLAFSGGVDSRLLLELLSRYQKAYSVDNQSTDSHSFKCHAVYVHHGLSSNADEWAGKCLVWAEQAGITCSVERVSLDTNSGESIELLAREARYQALAKHIQSGDLLLTGQHADDQVETFLLALKRGSGPKGLSSMAESMPFAGGTLVRPLLAIKREQIEAVAKEQGLDWVEDESNQDTRYDRNFLRHRIMPELSERWPSIHQAVQRSASLCAQQEALLDELLLAVFERALQSDFSLSIEELATHSELARARLVRMWLAKLNANMPTQVQLNLIWNEVALAQQDANPKLQLKQGEVRRFQNRLYWVTETVDVTTWQSAIQTDTALLLPEQLGELTLSTNSEQATIAMPPHPELLRVTFNPEGLSAHPTTRSHSRKLKKLFQEYNVPSWLRRQIPILMYQDKVVAVGNLFVDQAFSGQDCELIWRKSL</sequence>
<accession>A7MXZ8</accession>
<proteinExistence type="inferred from homology"/>
<dbReference type="EC" id="6.3.4.19" evidence="1"/>
<dbReference type="EMBL" id="CP000789">
    <property type="protein sequence ID" value="ABU72169.1"/>
    <property type="molecule type" value="Genomic_DNA"/>
</dbReference>
<dbReference type="RefSeq" id="WP_012128686.1">
    <property type="nucleotide sequence ID" value="NC_009783.1"/>
</dbReference>
<dbReference type="SMR" id="A7MXZ8"/>
<dbReference type="KEGG" id="vha:VIBHAR_03220"/>
<dbReference type="PATRIC" id="fig|338187.25.peg.2970"/>
<dbReference type="Proteomes" id="UP000008152">
    <property type="component" value="Chromosome I"/>
</dbReference>
<dbReference type="GO" id="GO:0005737">
    <property type="term" value="C:cytoplasm"/>
    <property type="evidence" value="ECO:0007669"/>
    <property type="project" value="UniProtKB-SubCell"/>
</dbReference>
<dbReference type="GO" id="GO:0005524">
    <property type="term" value="F:ATP binding"/>
    <property type="evidence" value="ECO:0007669"/>
    <property type="project" value="UniProtKB-UniRule"/>
</dbReference>
<dbReference type="GO" id="GO:0032267">
    <property type="term" value="F:tRNA(Ile)-lysidine synthase activity"/>
    <property type="evidence" value="ECO:0007669"/>
    <property type="project" value="UniProtKB-EC"/>
</dbReference>
<dbReference type="GO" id="GO:0006400">
    <property type="term" value="P:tRNA modification"/>
    <property type="evidence" value="ECO:0007669"/>
    <property type="project" value="UniProtKB-UniRule"/>
</dbReference>
<dbReference type="CDD" id="cd01992">
    <property type="entry name" value="TilS_N"/>
    <property type="match status" value="1"/>
</dbReference>
<dbReference type="Gene3D" id="1.20.59.20">
    <property type="match status" value="1"/>
</dbReference>
<dbReference type="Gene3D" id="3.40.50.620">
    <property type="entry name" value="HUPs"/>
    <property type="match status" value="1"/>
</dbReference>
<dbReference type="HAMAP" id="MF_01161">
    <property type="entry name" value="tRNA_Ile_lys_synt"/>
    <property type="match status" value="1"/>
</dbReference>
<dbReference type="InterPro" id="IPR012796">
    <property type="entry name" value="Lysidine-tRNA-synth_C"/>
</dbReference>
<dbReference type="InterPro" id="IPR014729">
    <property type="entry name" value="Rossmann-like_a/b/a_fold"/>
</dbReference>
<dbReference type="InterPro" id="IPR011063">
    <property type="entry name" value="TilS/TtcA_N"/>
</dbReference>
<dbReference type="InterPro" id="IPR012094">
    <property type="entry name" value="tRNA_Ile_lys_synt"/>
</dbReference>
<dbReference type="InterPro" id="IPR012795">
    <property type="entry name" value="tRNA_Ile_lys_synt_N"/>
</dbReference>
<dbReference type="InterPro" id="IPR015262">
    <property type="entry name" value="tRNA_Ile_lys_synt_subst-bd"/>
</dbReference>
<dbReference type="NCBIfam" id="TIGR02433">
    <property type="entry name" value="lysidine_TilS_C"/>
    <property type="match status" value="1"/>
</dbReference>
<dbReference type="NCBIfam" id="TIGR02432">
    <property type="entry name" value="lysidine_TilS_N"/>
    <property type="match status" value="1"/>
</dbReference>
<dbReference type="PANTHER" id="PTHR43033">
    <property type="entry name" value="TRNA(ILE)-LYSIDINE SYNTHASE-RELATED"/>
    <property type="match status" value="1"/>
</dbReference>
<dbReference type="PANTHER" id="PTHR43033:SF1">
    <property type="entry name" value="TRNA(ILE)-LYSIDINE SYNTHASE-RELATED"/>
    <property type="match status" value="1"/>
</dbReference>
<dbReference type="Pfam" id="PF01171">
    <property type="entry name" value="ATP_bind_3"/>
    <property type="match status" value="1"/>
</dbReference>
<dbReference type="Pfam" id="PF09179">
    <property type="entry name" value="TilS"/>
    <property type="match status" value="1"/>
</dbReference>
<dbReference type="Pfam" id="PF11734">
    <property type="entry name" value="TilS_C"/>
    <property type="match status" value="1"/>
</dbReference>
<dbReference type="SMART" id="SM00977">
    <property type="entry name" value="TilS_C"/>
    <property type="match status" value="1"/>
</dbReference>
<dbReference type="SUPFAM" id="SSF52402">
    <property type="entry name" value="Adenine nucleotide alpha hydrolases-like"/>
    <property type="match status" value="1"/>
</dbReference>
<dbReference type="SUPFAM" id="SSF82829">
    <property type="entry name" value="MesJ substrate recognition domain-like"/>
    <property type="match status" value="1"/>
</dbReference>
<dbReference type="SUPFAM" id="SSF56037">
    <property type="entry name" value="PheT/TilS domain"/>
    <property type="match status" value="1"/>
</dbReference>
<gene>
    <name evidence="1" type="primary">tilS</name>
    <name type="ordered locus">VIBHAR_03220</name>
</gene>
<organism>
    <name type="scientific">Vibrio campbellii (strain ATCC BAA-1116)</name>
    <dbReference type="NCBI Taxonomy" id="2902295"/>
    <lineage>
        <taxon>Bacteria</taxon>
        <taxon>Pseudomonadati</taxon>
        <taxon>Pseudomonadota</taxon>
        <taxon>Gammaproteobacteria</taxon>
        <taxon>Vibrionales</taxon>
        <taxon>Vibrionaceae</taxon>
        <taxon>Vibrio</taxon>
    </lineage>
</organism>
<reference key="1">
    <citation type="submission" date="2007-08" db="EMBL/GenBank/DDBJ databases">
        <authorList>
            <consortium name="The Vibrio harveyi Genome Sequencing Project"/>
            <person name="Bassler B."/>
            <person name="Clifton S.W."/>
            <person name="Fulton L."/>
            <person name="Delehaunty K."/>
            <person name="Fronick C."/>
            <person name="Harrison M."/>
            <person name="Markivic C."/>
            <person name="Fulton R."/>
            <person name="Tin-Wollam A.-M."/>
            <person name="Shah N."/>
            <person name="Pepin K."/>
            <person name="Nash W."/>
            <person name="Thiruvilangam P."/>
            <person name="Bhonagiri V."/>
            <person name="Waters C."/>
            <person name="Tu K.C."/>
            <person name="Irgon J."/>
            <person name="Wilson R.K."/>
        </authorList>
    </citation>
    <scope>NUCLEOTIDE SEQUENCE [LARGE SCALE GENOMIC DNA]</scope>
    <source>
        <strain>ATCC BAA-1116 / BB120</strain>
    </source>
</reference>
<name>TILS_VIBC1</name>